<dbReference type="EC" id="2.5.1.3" evidence="1"/>
<dbReference type="EMBL" id="CP000036">
    <property type="protein sequence ID" value="ABB68454.1"/>
    <property type="molecule type" value="Genomic_DNA"/>
</dbReference>
<dbReference type="RefSeq" id="WP_000284599.1">
    <property type="nucleotide sequence ID" value="NC_007613.1"/>
</dbReference>
<dbReference type="SMR" id="Q31U04"/>
<dbReference type="KEGG" id="sbo:SBO_4014"/>
<dbReference type="HOGENOM" id="CLU_018272_3_3_6"/>
<dbReference type="UniPathway" id="UPA00060">
    <property type="reaction ID" value="UER00141"/>
</dbReference>
<dbReference type="Proteomes" id="UP000007067">
    <property type="component" value="Chromosome"/>
</dbReference>
<dbReference type="GO" id="GO:0005737">
    <property type="term" value="C:cytoplasm"/>
    <property type="evidence" value="ECO:0007669"/>
    <property type="project" value="TreeGrafter"/>
</dbReference>
<dbReference type="GO" id="GO:0000287">
    <property type="term" value="F:magnesium ion binding"/>
    <property type="evidence" value="ECO:0007669"/>
    <property type="project" value="UniProtKB-UniRule"/>
</dbReference>
<dbReference type="GO" id="GO:0004789">
    <property type="term" value="F:thiamine-phosphate diphosphorylase activity"/>
    <property type="evidence" value="ECO:0007669"/>
    <property type="project" value="UniProtKB-UniRule"/>
</dbReference>
<dbReference type="GO" id="GO:0009228">
    <property type="term" value="P:thiamine biosynthetic process"/>
    <property type="evidence" value="ECO:0007669"/>
    <property type="project" value="UniProtKB-KW"/>
</dbReference>
<dbReference type="GO" id="GO:0009229">
    <property type="term" value="P:thiamine diphosphate biosynthetic process"/>
    <property type="evidence" value="ECO:0007669"/>
    <property type="project" value="UniProtKB-UniRule"/>
</dbReference>
<dbReference type="CDD" id="cd00564">
    <property type="entry name" value="TMP_TenI"/>
    <property type="match status" value="1"/>
</dbReference>
<dbReference type="FunFam" id="3.20.20.70:FF:000064">
    <property type="entry name" value="Thiamine-phosphate synthase"/>
    <property type="match status" value="1"/>
</dbReference>
<dbReference type="Gene3D" id="3.20.20.70">
    <property type="entry name" value="Aldolase class I"/>
    <property type="match status" value="1"/>
</dbReference>
<dbReference type="HAMAP" id="MF_00097">
    <property type="entry name" value="TMP_synthase"/>
    <property type="match status" value="1"/>
</dbReference>
<dbReference type="InterPro" id="IPR013785">
    <property type="entry name" value="Aldolase_TIM"/>
</dbReference>
<dbReference type="InterPro" id="IPR036206">
    <property type="entry name" value="ThiamineP_synth_sf"/>
</dbReference>
<dbReference type="InterPro" id="IPR022998">
    <property type="entry name" value="ThiamineP_synth_TenI"/>
</dbReference>
<dbReference type="InterPro" id="IPR034291">
    <property type="entry name" value="TMP_synthase"/>
</dbReference>
<dbReference type="NCBIfam" id="NF002904">
    <property type="entry name" value="PRK03512.1"/>
    <property type="match status" value="1"/>
</dbReference>
<dbReference type="NCBIfam" id="TIGR00693">
    <property type="entry name" value="thiE"/>
    <property type="match status" value="1"/>
</dbReference>
<dbReference type="PANTHER" id="PTHR20857">
    <property type="entry name" value="THIAMINE-PHOSPHATE PYROPHOSPHORYLASE"/>
    <property type="match status" value="1"/>
</dbReference>
<dbReference type="PANTHER" id="PTHR20857:SF15">
    <property type="entry name" value="THIAMINE-PHOSPHATE SYNTHASE"/>
    <property type="match status" value="1"/>
</dbReference>
<dbReference type="Pfam" id="PF02581">
    <property type="entry name" value="TMP-TENI"/>
    <property type="match status" value="1"/>
</dbReference>
<dbReference type="SUPFAM" id="SSF51391">
    <property type="entry name" value="Thiamin phosphate synthase"/>
    <property type="match status" value="1"/>
</dbReference>
<comment type="function">
    <text evidence="1">Condenses 4-methyl-5-(beta-hydroxyethyl)thiazole monophosphate (THZ-P) and 2-methyl-4-amino-5-hydroxymethyl pyrimidine pyrophosphate (HMP-PP) to form thiamine monophosphate (TMP).</text>
</comment>
<comment type="catalytic activity">
    <reaction evidence="1">
        <text>2-[(2R,5Z)-2-carboxy-4-methylthiazol-5(2H)-ylidene]ethyl phosphate + 4-amino-2-methyl-5-(diphosphooxymethyl)pyrimidine + 2 H(+) = thiamine phosphate + CO2 + diphosphate</text>
        <dbReference type="Rhea" id="RHEA:47844"/>
        <dbReference type="ChEBI" id="CHEBI:15378"/>
        <dbReference type="ChEBI" id="CHEBI:16526"/>
        <dbReference type="ChEBI" id="CHEBI:33019"/>
        <dbReference type="ChEBI" id="CHEBI:37575"/>
        <dbReference type="ChEBI" id="CHEBI:57841"/>
        <dbReference type="ChEBI" id="CHEBI:62899"/>
        <dbReference type="EC" id="2.5.1.3"/>
    </reaction>
</comment>
<comment type="catalytic activity">
    <reaction evidence="1">
        <text>2-(2-carboxy-4-methylthiazol-5-yl)ethyl phosphate + 4-amino-2-methyl-5-(diphosphooxymethyl)pyrimidine + 2 H(+) = thiamine phosphate + CO2 + diphosphate</text>
        <dbReference type="Rhea" id="RHEA:47848"/>
        <dbReference type="ChEBI" id="CHEBI:15378"/>
        <dbReference type="ChEBI" id="CHEBI:16526"/>
        <dbReference type="ChEBI" id="CHEBI:33019"/>
        <dbReference type="ChEBI" id="CHEBI:37575"/>
        <dbReference type="ChEBI" id="CHEBI:57841"/>
        <dbReference type="ChEBI" id="CHEBI:62890"/>
        <dbReference type="EC" id="2.5.1.3"/>
    </reaction>
</comment>
<comment type="catalytic activity">
    <reaction evidence="1">
        <text>4-methyl-5-(2-phosphooxyethyl)-thiazole + 4-amino-2-methyl-5-(diphosphooxymethyl)pyrimidine + H(+) = thiamine phosphate + diphosphate</text>
        <dbReference type="Rhea" id="RHEA:22328"/>
        <dbReference type="ChEBI" id="CHEBI:15378"/>
        <dbReference type="ChEBI" id="CHEBI:33019"/>
        <dbReference type="ChEBI" id="CHEBI:37575"/>
        <dbReference type="ChEBI" id="CHEBI:57841"/>
        <dbReference type="ChEBI" id="CHEBI:58296"/>
        <dbReference type="EC" id="2.5.1.3"/>
    </reaction>
</comment>
<comment type="cofactor">
    <cofactor evidence="1">
        <name>Mg(2+)</name>
        <dbReference type="ChEBI" id="CHEBI:18420"/>
    </cofactor>
    <text evidence="1">Binds 1 Mg(2+) ion per subunit.</text>
</comment>
<comment type="pathway">
    <text evidence="1">Cofactor biosynthesis; thiamine diphosphate biosynthesis; thiamine phosphate from 4-amino-2-methyl-5-diphosphomethylpyrimidine and 4-methyl-5-(2-phosphoethyl)-thiazole: step 1/1.</text>
</comment>
<comment type="similarity">
    <text evidence="1">Belongs to the thiamine-phosphate synthase family.</text>
</comment>
<feature type="chain" id="PRO_1000008170" description="Thiamine-phosphate synthase">
    <location>
        <begin position="1"/>
        <end position="211"/>
    </location>
</feature>
<feature type="binding site" evidence="1">
    <location>
        <begin position="37"/>
        <end position="41"/>
    </location>
    <ligand>
        <name>4-amino-2-methyl-5-(diphosphooxymethyl)pyrimidine</name>
        <dbReference type="ChEBI" id="CHEBI:57841"/>
    </ligand>
</feature>
<feature type="binding site" evidence="1">
    <location>
        <position position="69"/>
    </location>
    <ligand>
        <name>4-amino-2-methyl-5-(diphosphooxymethyl)pyrimidine</name>
        <dbReference type="ChEBI" id="CHEBI:57841"/>
    </ligand>
</feature>
<feature type="binding site" evidence="1">
    <location>
        <position position="70"/>
    </location>
    <ligand>
        <name>Mg(2+)</name>
        <dbReference type="ChEBI" id="CHEBI:18420"/>
    </ligand>
</feature>
<feature type="binding site" evidence="1">
    <location>
        <position position="89"/>
    </location>
    <ligand>
        <name>Mg(2+)</name>
        <dbReference type="ChEBI" id="CHEBI:18420"/>
    </ligand>
</feature>
<feature type="binding site" evidence="1">
    <location>
        <position position="108"/>
    </location>
    <ligand>
        <name>4-amino-2-methyl-5-(diphosphooxymethyl)pyrimidine</name>
        <dbReference type="ChEBI" id="CHEBI:57841"/>
    </ligand>
</feature>
<feature type="binding site" evidence="1">
    <location>
        <begin position="134"/>
        <end position="136"/>
    </location>
    <ligand>
        <name>2-[(2R,5Z)-2-carboxy-4-methylthiazol-5(2H)-ylidene]ethyl phosphate</name>
        <dbReference type="ChEBI" id="CHEBI:62899"/>
    </ligand>
</feature>
<feature type="binding site" evidence="1">
    <location>
        <position position="137"/>
    </location>
    <ligand>
        <name>4-amino-2-methyl-5-(diphosphooxymethyl)pyrimidine</name>
        <dbReference type="ChEBI" id="CHEBI:57841"/>
    </ligand>
</feature>
<feature type="binding site" evidence="1">
    <location>
        <position position="166"/>
    </location>
    <ligand>
        <name>2-[(2R,5Z)-2-carboxy-4-methylthiazol-5(2H)-ylidene]ethyl phosphate</name>
        <dbReference type="ChEBI" id="CHEBI:62899"/>
    </ligand>
</feature>
<feature type="binding site" evidence="1">
    <location>
        <begin position="186"/>
        <end position="187"/>
    </location>
    <ligand>
        <name>2-[(2R,5Z)-2-carboxy-4-methylthiazol-5(2H)-ylidene]ethyl phosphate</name>
        <dbReference type="ChEBI" id="CHEBI:62899"/>
    </ligand>
</feature>
<accession>Q31U04</accession>
<evidence type="ECO:0000255" key="1">
    <source>
        <dbReference type="HAMAP-Rule" id="MF_00097"/>
    </source>
</evidence>
<keyword id="KW-0460">Magnesium</keyword>
<keyword id="KW-0479">Metal-binding</keyword>
<keyword id="KW-0784">Thiamine biosynthesis</keyword>
<keyword id="KW-0808">Transferase</keyword>
<proteinExistence type="inferred from homology"/>
<protein>
    <recommendedName>
        <fullName evidence="1">Thiamine-phosphate synthase</fullName>
        <shortName evidence="1">TP synthase</shortName>
        <shortName evidence="1">TPS</shortName>
        <ecNumber evidence="1">2.5.1.3</ecNumber>
    </recommendedName>
    <alternativeName>
        <fullName evidence="1">Thiamine-phosphate pyrophosphorylase</fullName>
        <shortName evidence="1">TMP pyrophosphorylase</shortName>
        <shortName evidence="1">TMP-PPase</shortName>
    </alternativeName>
</protein>
<name>THIE_SHIBS</name>
<reference key="1">
    <citation type="journal article" date="2005" name="Nucleic Acids Res.">
        <title>Genome dynamics and diversity of Shigella species, the etiologic agents of bacillary dysentery.</title>
        <authorList>
            <person name="Yang F."/>
            <person name="Yang J."/>
            <person name="Zhang X."/>
            <person name="Chen L."/>
            <person name="Jiang Y."/>
            <person name="Yan Y."/>
            <person name="Tang X."/>
            <person name="Wang J."/>
            <person name="Xiong Z."/>
            <person name="Dong J."/>
            <person name="Xue Y."/>
            <person name="Zhu Y."/>
            <person name="Xu X."/>
            <person name="Sun L."/>
            <person name="Chen S."/>
            <person name="Nie H."/>
            <person name="Peng J."/>
            <person name="Xu J."/>
            <person name="Wang Y."/>
            <person name="Yuan Z."/>
            <person name="Wen Y."/>
            <person name="Yao Z."/>
            <person name="Shen Y."/>
            <person name="Qiang B."/>
            <person name="Hou Y."/>
            <person name="Yu J."/>
            <person name="Jin Q."/>
        </authorList>
    </citation>
    <scope>NUCLEOTIDE SEQUENCE [LARGE SCALE GENOMIC DNA]</scope>
    <source>
        <strain>Sb227</strain>
    </source>
</reference>
<sequence>MYQPDFPPVPFRLGLYPVVDSVQWIERLLDAGVRTLQLRIKDRRDEEVEADVVAAIALGRRYNARLFINDYWRLAIKHQAYGVHLGQEDLQATDLNAIRAAGLRLGVSTHDDMEIDVALAARPSYIALGHVFPTQTKQMPSAPQGLEQLARHVERLADYPTVAIGGISLARAPAVIATGVGSIAVISAITQAADWRLATAQLLEIAGVGDE</sequence>
<gene>
    <name evidence="1" type="primary">thiE</name>
    <name type="ordered locus">SBO_4014</name>
</gene>
<organism>
    <name type="scientific">Shigella boydii serotype 4 (strain Sb227)</name>
    <dbReference type="NCBI Taxonomy" id="300268"/>
    <lineage>
        <taxon>Bacteria</taxon>
        <taxon>Pseudomonadati</taxon>
        <taxon>Pseudomonadota</taxon>
        <taxon>Gammaproteobacteria</taxon>
        <taxon>Enterobacterales</taxon>
        <taxon>Enterobacteriaceae</taxon>
        <taxon>Shigella</taxon>
    </lineage>
</organism>